<proteinExistence type="inferred from homology"/>
<accession>Q6FQH2</accession>
<gene>
    <name type="primary">HAL5</name>
    <name type="ordered locus">CAGL0I06248g</name>
</gene>
<name>HAL5_CANGA</name>
<organism>
    <name type="scientific">Candida glabrata (strain ATCC 2001 / BCRC 20586 / JCM 3761 / NBRC 0622 / NRRL Y-65 / CBS 138)</name>
    <name type="common">Yeast</name>
    <name type="synonym">Nakaseomyces glabratus</name>
    <dbReference type="NCBI Taxonomy" id="284593"/>
    <lineage>
        <taxon>Eukaryota</taxon>
        <taxon>Fungi</taxon>
        <taxon>Dikarya</taxon>
        <taxon>Ascomycota</taxon>
        <taxon>Saccharomycotina</taxon>
        <taxon>Saccharomycetes</taxon>
        <taxon>Saccharomycetales</taxon>
        <taxon>Saccharomycetaceae</taxon>
        <taxon>Nakaseomyces</taxon>
    </lineage>
</organism>
<evidence type="ECO:0000250" key="1"/>
<evidence type="ECO:0000255" key="2">
    <source>
        <dbReference type="PROSITE-ProRule" id="PRU00159"/>
    </source>
</evidence>
<evidence type="ECO:0000255" key="3">
    <source>
        <dbReference type="PROSITE-ProRule" id="PRU10027"/>
    </source>
</evidence>
<evidence type="ECO:0000256" key="4">
    <source>
        <dbReference type="SAM" id="MobiDB-lite"/>
    </source>
</evidence>
<evidence type="ECO:0000305" key="5"/>
<keyword id="KW-0067">ATP-binding</keyword>
<keyword id="KW-0418">Kinase</keyword>
<keyword id="KW-0547">Nucleotide-binding</keyword>
<keyword id="KW-1185">Reference proteome</keyword>
<keyword id="KW-0723">Serine/threonine-protein kinase</keyword>
<keyword id="KW-0808">Transferase</keyword>
<feature type="chain" id="PRO_0000333580" description="Serine/threonine-protein kinase HAL5">
    <location>
        <begin position="1"/>
        <end position="813"/>
    </location>
</feature>
<feature type="domain" description="Protein kinase" evidence="2">
    <location>
        <begin position="477"/>
        <end position="800"/>
    </location>
</feature>
<feature type="region of interest" description="Disordered" evidence="4">
    <location>
        <begin position="27"/>
        <end position="83"/>
    </location>
</feature>
<feature type="region of interest" description="Disordered" evidence="4">
    <location>
        <begin position="95"/>
        <end position="117"/>
    </location>
</feature>
<feature type="region of interest" description="Disordered" evidence="4">
    <location>
        <begin position="157"/>
        <end position="277"/>
    </location>
</feature>
<feature type="region of interest" description="Disordered" evidence="4">
    <location>
        <begin position="429"/>
        <end position="455"/>
    </location>
</feature>
<feature type="compositionally biased region" description="Basic and acidic residues" evidence="4">
    <location>
        <begin position="35"/>
        <end position="72"/>
    </location>
</feature>
<feature type="compositionally biased region" description="Polar residues" evidence="4">
    <location>
        <begin position="157"/>
        <end position="169"/>
    </location>
</feature>
<feature type="compositionally biased region" description="Basic and acidic residues" evidence="4">
    <location>
        <begin position="177"/>
        <end position="186"/>
    </location>
</feature>
<feature type="compositionally biased region" description="Low complexity" evidence="4">
    <location>
        <begin position="206"/>
        <end position="219"/>
    </location>
</feature>
<feature type="compositionally biased region" description="Polar residues" evidence="4">
    <location>
        <begin position="226"/>
        <end position="274"/>
    </location>
</feature>
<feature type="compositionally biased region" description="Low complexity" evidence="4">
    <location>
        <begin position="437"/>
        <end position="455"/>
    </location>
</feature>
<feature type="active site" description="Proton acceptor" evidence="2 3">
    <location>
        <position position="651"/>
    </location>
</feature>
<feature type="binding site" evidence="2">
    <location>
        <begin position="483"/>
        <end position="491"/>
    </location>
    <ligand>
        <name>ATP</name>
        <dbReference type="ChEBI" id="CHEBI:30616"/>
    </ligand>
</feature>
<feature type="binding site" evidence="2">
    <location>
        <position position="520"/>
    </location>
    <ligand>
        <name>ATP</name>
        <dbReference type="ChEBI" id="CHEBI:30616"/>
    </ligand>
</feature>
<reference key="1">
    <citation type="journal article" date="2004" name="Nature">
        <title>Genome evolution in yeasts.</title>
        <authorList>
            <person name="Dujon B."/>
            <person name="Sherman D."/>
            <person name="Fischer G."/>
            <person name="Durrens P."/>
            <person name="Casaregola S."/>
            <person name="Lafontaine I."/>
            <person name="de Montigny J."/>
            <person name="Marck C."/>
            <person name="Neuveglise C."/>
            <person name="Talla E."/>
            <person name="Goffard N."/>
            <person name="Frangeul L."/>
            <person name="Aigle M."/>
            <person name="Anthouard V."/>
            <person name="Babour A."/>
            <person name="Barbe V."/>
            <person name="Barnay S."/>
            <person name="Blanchin S."/>
            <person name="Beckerich J.-M."/>
            <person name="Beyne E."/>
            <person name="Bleykasten C."/>
            <person name="Boisrame A."/>
            <person name="Boyer J."/>
            <person name="Cattolico L."/>
            <person name="Confanioleri F."/>
            <person name="de Daruvar A."/>
            <person name="Despons L."/>
            <person name="Fabre E."/>
            <person name="Fairhead C."/>
            <person name="Ferry-Dumazet H."/>
            <person name="Groppi A."/>
            <person name="Hantraye F."/>
            <person name="Hennequin C."/>
            <person name="Jauniaux N."/>
            <person name="Joyet P."/>
            <person name="Kachouri R."/>
            <person name="Kerrest A."/>
            <person name="Koszul R."/>
            <person name="Lemaire M."/>
            <person name="Lesur I."/>
            <person name="Ma L."/>
            <person name="Muller H."/>
            <person name="Nicaud J.-M."/>
            <person name="Nikolski M."/>
            <person name="Oztas S."/>
            <person name="Ozier-Kalogeropoulos O."/>
            <person name="Pellenz S."/>
            <person name="Potier S."/>
            <person name="Richard G.-F."/>
            <person name="Straub M.-L."/>
            <person name="Suleau A."/>
            <person name="Swennen D."/>
            <person name="Tekaia F."/>
            <person name="Wesolowski-Louvel M."/>
            <person name="Westhof E."/>
            <person name="Wirth B."/>
            <person name="Zeniou-Meyer M."/>
            <person name="Zivanovic Y."/>
            <person name="Bolotin-Fukuhara M."/>
            <person name="Thierry A."/>
            <person name="Bouchier C."/>
            <person name="Caudron B."/>
            <person name="Scarpelli C."/>
            <person name="Gaillardin C."/>
            <person name="Weissenbach J."/>
            <person name="Wincker P."/>
            <person name="Souciet J.-L."/>
        </authorList>
    </citation>
    <scope>NUCLEOTIDE SEQUENCE [LARGE SCALE GENOMIC DNA]</scope>
    <source>
        <strain>ATCC 2001 / BCRC 20586 / JCM 3761 / NBRC 0622 / NRRL Y-65 / CBS 138</strain>
    </source>
</reference>
<comment type="function">
    <text evidence="1">Protein kinase involved in salt tolerance and pH sensitivity, probably by regulating plasma membrane potential and cation influx. Positively controls the TRK1 potassium transport system in response to potassium starvation. Stabilizes plasma membrane nutrient transporters in the plasma membrane by preventing their vacuolar sorting and degradation (By similarity).</text>
</comment>
<comment type="catalytic activity">
    <reaction>
        <text>L-seryl-[protein] + ATP = O-phospho-L-seryl-[protein] + ADP + H(+)</text>
        <dbReference type="Rhea" id="RHEA:17989"/>
        <dbReference type="Rhea" id="RHEA-COMP:9863"/>
        <dbReference type="Rhea" id="RHEA-COMP:11604"/>
        <dbReference type="ChEBI" id="CHEBI:15378"/>
        <dbReference type="ChEBI" id="CHEBI:29999"/>
        <dbReference type="ChEBI" id="CHEBI:30616"/>
        <dbReference type="ChEBI" id="CHEBI:83421"/>
        <dbReference type="ChEBI" id="CHEBI:456216"/>
        <dbReference type="EC" id="2.7.11.1"/>
    </reaction>
</comment>
<comment type="catalytic activity">
    <reaction>
        <text>L-threonyl-[protein] + ATP = O-phospho-L-threonyl-[protein] + ADP + H(+)</text>
        <dbReference type="Rhea" id="RHEA:46608"/>
        <dbReference type="Rhea" id="RHEA-COMP:11060"/>
        <dbReference type="Rhea" id="RHEA-COMP:11605"/>
        <dbReference type="ChEBI" id="CHEBI:15378"/>
        <dbReference type="ChEBI" id="CHEBI:30013"/>
        <dbReference type="ChEBI" id="CHEBI:30616"/>
        <dbReference type="ChEBI" id="CHEBI:61977"/>
        <dbReference type="ChEBI" id="CHEBI:456216"/>
        <dbReference type="EC" id="2.7.11.1"/>
    </reaction>
</comment>
<comment type="similarity">
    <text evidence="5">Belongs to the protein kinase superfamily. CAMK Ser/Thr protein kinase family. NPR/HAL subfamily. HAL5 sub-subfamily.</text>
</comment>
<sequence>MGESNTAAPPSRSRSLSASIKGLFGKNSISSNEINGKKEAFVQSGTREDQRYNEEHHLKKIDTKASVPKKDTQLSPLSAPGSYLKKSTSIASSLHLNSGKQSVTSSRAQSISSDGNGFLSQESFISEEHEDDIDDTTYYDKSTRGFTNLSKEVESYSISRKNSIQQSRKASVDDNEVDKRNAHFPDSDTTIDSVLGDKNKNQKVMNQINSISNISRSGSVPANPPILSSKSRRGSNAMSIRSPSVRSTASIVSGNSNSEVITPSSKPATQNISEDGNIKKTDNTLKCVINSKHFKVYENGFHEHHLPVIDLVKGDSTDSLNSSTVSKGTEGIEINRQKSSFSLTGIFKKKNGDKMNELLDTEPFGNASSLMPTKAFCPRYKTKDGSMIEEPLEQETTHKKIPKIVNPYAAVGSEELKLITTLSDKIKKGLKNKDGQSRSGSQSGSASSSLHTSPVASSTSLSSKFHHALVTCSEKYGDPVGVIGHGTYGVVRVCSRPLLISDSAPFPSYCNDKKLFFAIKVLKPKDDEQLEKFSTRVTSEFIIGHSLSRRHKAHALQNKVCPSKRLAHKAQRKLDWECPNILRVIDLMETNNTFIEVMELCPAGDLHSLLVSRSQSGNAIGSLHPLEADCFMKQLLRGVQYMHDHGIAHCDLKPENLLFHPNGLLKICDFGTSSVFQTAWEKHVHFQNGVIGSEPYVAPEVFQLGKDYDPRLIDCWSCGIVYCTMVFGQYLWKIAIENKDSLYASFISQMKDENQFSLFEELRHVNADLNKLRKNVLYNMFQTNPEKRITVDKILHSSWMKHTRCCVSYNHSV</sequence>
<protein>
    <recommendedName>
        <fullName>Serine/threonine-protein kinase HAL5</fullName>
        <ecNumber>2.7.11.1</ecNumber>
    </recommendedName>
</protein>
<dbReference type="EC" id="2.7.11.1"/>
<dbReference type="EMBL" id="CR380955">
    <property type="protein sequence ID" value="CAG60459.1"/>
    <property type="molecule type" value="Genomic_DNA"/>
</dbReference>
<dbReference type="RefSeq" id="XP_447522.1">
    <property type="nucleotide sequence ID" value="XM_447522.1"/>
</dbReference>
<dbReference type="SMR" id="Q6FQH2"/>
<dbReference type="STRING" id="284593.Q6FQH2"/>
<dbReference type="EnsemblFungi" id="CAGL0I06248g-T">
    <property type="protein sequence ID" value="CAGL0I06248g-T-p1"/>
    <property type="gene ID" value="CAGL0I06248g"/>
</dbReference>
<dbReference type="KEGG" id="cgr:2889154"/>
<dbReference type="CGD" id="CAL0132660">
    <property type="gene designation" value="CAGL0I06248g"/>
</dbReference>
<dbReference type="VEuPathDB" id="FungiDB:CAGL0I06248g"/>
<dbReference type="eggNOG" id="KOG0590">
    <property type="taxonomic scope" value="Eukaryota"/>
</dbReference>
<dbReference type="HOGENOM" id="CLU_016904_0_0_1"/>
<dbReference type="InParanoid" id="Q6FQH2"/>
<dbReference type="Proteomes" id="UP000002428">
    <property type="component" value="Chromosome I"/>
</dbReference>
<dbReference type="GO" id="GO:0005829">
    <property type="term" value="C:cytosol"/>
    <property type="evidence" value="ECO:0007669"/>
    <property type="project" value="TreeGrafter"/>
</dbReference>
<dbReference type="GO" id="GO:0005886">
    <property type="term" value="C:plasma membrane"/>
    <property type="evidence" value="ECO:0007669"/>
    <property type="project" value="EnsemblFungi"/>
</dbReference>
<dbReference type="GO" id="GO:0005524">
    <property type="term" value="F:ATP binding"/>
    <property type="evidence" value="ECO:0007669"/>
    <property type="project" value="UniProtKB-KW"/>
</dbReference>
<dbReference type="GO" id="GO:0106310">
    <property type="term" value="F:protein serine kinase activity"/>
    <property type="evidence" value="ECO:0007669"/>
    <property type="project" value="RHEA"/>
</dbReference>
<dbReference type="GO" id="GO:0004674">
    <property type="term" value="F:protein serine/threonine kinase activity"/>
    <property type="evidence" value="ECO:0007669"/>
    <property type="project" value="UniProtKB-KW"/>
</dbReference>
<dbReference type="GO" id="GO:0030003">
    <property type="term" value="P:intracellular monoatomic cation homeostasis"/>
    <property type="evidence" value="ECO:0007669"/>
    <property type="project" value="EnsemblFungi"/>
</dbReference>
<dbReference type="GO" id="GO:0045807">
    <property type="term" value="P:positive regulation of endocytosis"/>
    <property type="evidence" value="ECO:0007669"/>
    <property type="project" value="EnsemblFungi"/>
</dbReference>
<dbReference type="GO" id="GO:0008104">
    <property type="term" value="P:protein localization"/>
    <property type="evidence" value="ECO:0007669"/>
    <property type="project" value="EnsemblFungi"/>
</dbReference>
<dbReference type="Gene3D" id="1.10.510.10">
    <property type="entry name" value="Transferase(Phosphotransferase) domain 1"/>
    <property type="match status" value="1"/>
</dbReference>
<dbReference type="InterPro" id="IPR011009">
    <property type="entry name" value="Kinase-like_dom_sf"/>
</dbReference>
<dbReference type="InterPro" id="IPR000719">
    <property type="entry name" value="Prot_kinase_dom"/>
</dbReference>
<dbReference type="InterPro" id="IPR008271">
    <property type="entry name" value="Ser/Thr_kinase_AS"/>
</dbReference>
<dbReference type="PANTHER" id="PTHR24343">
    <property type="entry name" value="SERINE/THREONINE KINASE"/>
    <property type="match status" value="1"/>
</dbReference>
<dbReference type="PANTHER" id="PTHR24343:SF43">
    <property type="entry name" value="SERINE_THREONINE-PROTEIN KINASE HAL5-RELATED"/>
    <property type="match status" value="1"/>
</dbReference>
<dbReference type="Pfam" id="PF00069">
    <property type="entry name" value="Pkinase"/>
    <property type="match status" value="1"/>
</dbReference>
<dbReference type="SMART" id="SM00220">
    <property type="entry name" value="S_TKc"/>
    <property type="match status" value="1"/>
</dbReference>
<dbReference type="SUPFAM" id="SSF56112">
    <property type="entry name" value="Protein kinase-like (PK-like)"/>
    <property type="match status" value="1"/>
</dbReference>
<dbReference type="PROSITE" id="PS50011">
    <property type="entry name" value="PROTEIN_KINASE_DOM"/>
    <property type="match status" value="1"/>
</dbReference>
<dbReference type="PROSITE" id="PS00108">
    <property type="entry name" value="PROTEIN_KINASE_ST"/>
    <property type="match status" value="1"/>
</dbReference>